<reference key="1">
    <citation type="journal article" date="2001" name="Science">
        <title>Comparative genomics of Listeria species.</title>
        <authorList>
            <person name="Glaser P."/>
            <person name="Frangeul L."/>
            <person name="Buchrieser C."/>
            <person name="Rusniok C."/>
            <person name="Amend A."/>
            <person name="Baquero F."/>
            <person name="Berche P."/>
            <person name="Bloecker H."/>
            <person name="Brandt P."/>
            <person name="Chakraborty T."/>
            <person name="Charbit A."/>
            <person name="Chetouani F."/>
            <person name="Couve E."/>
            <person name="de Daruvar A."/>
            <person name="Dehoux P."/>
            <person name="Domann E."/>
            <person name="Dominguez-Bernal G."/>
            <person name="Duchaud E."/>
            <person name="Durant L."/>
            <person name="Dussurget O."/>
            <person name="Entian K.-D."/>
            <person name="Fsihi H."/>
            <person name="Garcia-del Portillo F."/>
            <person name="Garrido P."/>
            <person name="Gautier L."/>
            <person name="Goebel W."/>
            <person name="Gomez-Lopez N."/>
            <person name="Hain T."/>
            <person name="Hauf J."/>
            <person name="Jackson D."/>
            <person name="Jones L.-M."/>
            <person name="Kaerst U."/>
            <person name="Kreft J."/>
            <person name="Kuhn M."/>
            <person name="Kunst F."/>
            <person name="Kurapkat G."/>
            <person name="Madueno E."/>
            <person name="Maitournam A."/>
            <person name="Mata Vicente J."/>
            <person name="Ng E."/>
            <person name="Nedjari H."/>
            <person name="Nordsiek G."/>
            <person name="Novella S."/>
            <person name="de Pablos B."/>
            <person name="Perez-Diaz J.-C."/>
            <person name="Purcell R."/>
            <person name="Remmel B."/>
            <person name="Rose M."/>
            <person name="Schlueter T."/>
            <person name="Simoes N."/>
            <person name="Tierrez A."/>
            <person name="Vazquez-Boland J.-A."/>
            <person name="Voss H."/>
            <person name="Wehland J."/>
            <person name="Cossart P."/>
        </authorList>
    </citation>
    <scope>NUCLEOTIDE SEQUENCE [LARGE SCALE GENOMIC DNA]</scope>
    <source>
        <strain>ATCC BAA-679 / EGD-e</strain>
    </source>
</reference>
<keyword id="KW-0002">3D-structure</keyword>
<keyword id="KW-1185">Reference proteome</keyword>
<keyword id="KW-0687">Ribonucleoprotein</keyword>
<keyword id="KW-0689">Ribosomal protein</keyword>
<keyword id="KW-0694">RNA-binding</keyword>
<keyword id="KW-0699">rRNA-binding</keyword>
<evidence type="ECO:0000255" key="1">
    <source>
        <dbReference type="HAMAP-Rule" id="MF_01325"/>
    </source>
</evidence>
<evidence type="ECO:0000256" key="2">
    <source>
        <dbReference type="SAM" id="MobiDB-lite"/>
    </source>
</evidence>
<evidence type="ECO:0000305" key="3"/>
<evidence type="ECO:0007829" key="4">
    <source>
        <dbReference type="PDB" id="8A57"/>
    </source>
</evidence>
<evidence type="ECO:0007829" key="5">
    <source>
        <dbReference type="PDB" id="8A5I"/>
    </source>
</evidence>
<evidence type="ECO:0007829" key="6">
    <source>
        <dbReference type="PDB" id="8A63"/>
    </source>
</evidence>
<feature type="chain" id="PRO_0000077116" description="Large ribosomal subunit protein uL3">
    <location>
        <begin position="1"/>
        <end position="209"/>
    </location>
</feature>
<feature type="region of interest" description="Disordered" evidence="2">
    <location>
        <begin position="126"/>
        <end position="148"/>
    </location>
</feature>
<feature type="strand" evidence="4">
    <location>
        <begin position="4"/>
        <end position="16"/>
    </location>
</feature>
<feature type="strand" evidence="5">
    <location>
        <begin position="18"/>
        <end position="20"/>
    </location>
</feature>
<feature type="strand" evidence="4">
    <location>
        <begin position="22"/>
        <end position="29"/>
    </location>
</feature>
<feature type="strand" evidence="4">
    <location>
        <begin position="34"/>
        <end position="39"/>
    </location>
</feature>
<feature type="turn" evidence="4">
    <location>
        <begin position="41"/>
        <end position="44"/>
    </location>
</feature>
<feature type="strand" evidence="4">
    <location>
        <begin position="48"/>
        <end position="52"/>
    </location>
</feature>
<feature type="helix" evidence="4">
    <location>
        <begin position="58"/>
        <end position="60"/>
    </location>
</feature>
<feature type="helix" evidence="4">
    <location>
        <begin position="63"/>
        <end position="69"/>
    </location>
</feature>
<feature type="helix" evidence="4">
    <location>
        <begin position="70"/>
        <end position="72"/>
    </location>
</feature>
<feature type="strand" evidence="4">
    <location>
        <begin position="80"/>
        <end position="86"/>
    </location>
</feature>
<feature type="helix" evidence="4">
    <location>
        <begin position="99"/>
        <end position="101"/>
    </location>
</feature>
<feature type="strand" evidence="4">
    <location>
        <begin position="107"/>
        <end position="113"/>
    </location>
</feature>
<feature type="helix" evidence="4">
    <location>
        <begin position="122"/>
        <end position="126"/>
    </location>
</feature>
<feature type="strand" evidence="6">
    <location>
        <begin position="149"/>
        <end position="153"/>
    </location>
</feature>
<feature type="strand" evidence="4">
    <location>
        <begin position="168"/>
        <end position="180"/>
    </location>
</feature>
<feature type="turn" evidence="4">
    <location>
        <begin position="181"/>
        <end position="184"/>
    </location>
</feature>
<feature type="strand" evidence="4">
    <location>
        <begin position="185"/>
        <end position="190"/>
    </location>
</feature>
<feature type="strand" evidence="4">
    <location>
        <begin position="193"/>
        <end position="195"/>
    </location>
</feature>
<feature type="strand" evidence="4">
    <location>
        <begin position="199"/>
        <end position="204"/>
    </location>
</feature>
<sequence length="209" mass="22825">MTKGILGRKVGMTQVFTENGELIPVTVIEAAQNVVLQKKTVETDGYEAVQIGFEDKRAILSNKPEQGHVAKANTTPKRFIREFRDVNLDEYEIGAEVKVDVFAEGDIIDATGVSKGKGFQGVIKRHGQSRGPMAHGSRYHRRPGSMGPVAPNRVFKNKLLPGRMGGEQITIQNLEIVKVDVEKNVLLVKGNVPGAKKALVQIKTATKAK</sequence>
<name>RL3_LISMO</name>
<protein>
    <recommendedName>
        <fullName evidence="1">Large ribosomal subunit protein uL3</fullName>
    </recommendedName>
    <alternativeName>
        <fullName evidence="3">50S ribosomal protein L3</fullName>
    </alternativeName>
</protein>
<organism>
    <name type="scientific">Listeria monocytogenes serovar 1/2a (strain ATCC BAA-679 / EGD-e)</name>
    <dbReference type="NCBI Taxonomy" id="169963"/>
    <lineage>
        <taxon>Bacteria</taxon>
        <taxon>Bacillati</taxon>
        <taxon>Bacillota</taxon>
        <taxon>Bacilli</taxon>
        <taxon>Bacillales</taxon>
        <taxon>Listeriaceae</taxon>
        <taxon>Listeria</taxon>
    </lineage>
</organism>
<gene>
    <name evidence="1" type="primary">rplC</name>
    <name type="ordered locus">lmo2632</name>
</gene>
<dbReference type="EMBL" id="AL591983">
    <property type="protein sequence ID" value="CAD00710.1"/>
    <property type="molecule type" value="Genomic_DNA"/>
</dbReference>
<dbReference type="PIR" id="AH1403">
    <property type="entry name" value="AH1403"/>
</dbReference>
<dbReference type="RefSeq" id="NP_466155.1">
    <property type="nucleotide sequence ID" value="NC_003210.1"/>
</dbReference>
<dbReference type="RefSeq" id="WP_003726733.1">
    <property type="nucleotide sequence ID" value="NZ_CP149495.1"/>
</dbReference>
<dbReference type="PDB" id="7NHN">
    <property type="method" value="EM"/>
    <property type="resolution" value="2.90 A"/>
    <property type="chains" value="H=1-209"/>
</dbReference>
<dbReference type="PDB" id="8A57">
    <property type="method" value="EM"/>
    <property type="resolution" value="2.30 A"/>
    <property type="chains" value="H=1-209"/>
</dbReference>
<dbReference type="PDB" id="8A5I">
    <property type="method" value="EM"/>
    <property type="resolution" value="2.30 A"/>
    <property type="chains" value="H=1-209"/>
</dbReference>
<dbReference type="PDB" id="8A63">
    <property type="method" value="EM"/>
    <property type="resolution" value="3.10 A"/>
    <property type="chains" value="H=1-209"/>
</dbReference>
<dbReference type="PDBsum" id="7NHN"/>
<dbReference type="PDBsum" id="8A57"/>
<dbReference type="PDBsum" id="8A5I"/>
<dbReference type="PDBsum" id="8A63"/>
<dbReference type="EMDB" id="EMD-12334"/>
<dbReference type="EMDB" id="EMD-15161"/>
<dbReference type="EMDB" id="EMD-15175"/>
<dbReference type="EMDB" id="EMD-15204"/>
<dbReference type="SMR" id="Q8Y440"/>
<dbReference type="STRING" id="169963.gene:17595350"/>
<dbReference type="PaxDb" id="169963-lmo2632"/>
<dbReference type="EnsemblBacteria" id="CAD00710">
    <property type="protein sequence ID" value="CAD00710"/>
    <property type="gene ID" value="CAD00710"/>
</dbReference>
<dbReference type="GeneID" id="93240513"/>
<dbReference type="GeneID" id="987181"/>
<dbReference type="KEGG" id="lmo:lmo2632"/>
<dbReference type="PATRIC" id="fig|169963.11.peg.2696"/>
<dbReference type="eggNOG" id="COG0087">
    <property type="taxonomic scope" value="Bacteria"/>
</dbReference>
<dbReference type="HOGENOM" id="CLU_044142_4_1_9"/>
<dbReference type="OrthoDB" id="9806135at2"/>
<dbReference type="PhylomeDB" id="Q8Y440"/>
<dbReference type="BioCyc" id="LMON169963:LMO2632-MONOMER"/>
<dbReference type="Proteomes" id="UP000000817">
    <property type="component" value="Chromosome"/>
</dbReference>
<dbReference type="GO" id="GO:0022625">
    <property type="term" value="C:cytosolic large ribosomal subunit"/>
    <property type="evidence" value="ECO:0000318"/>
    <property type="project" value="GO_Central"/>
</dbReference>
<dbReference type="GO" id="GO:0019843">
    <property type="term" value="F:rRNA binding"/>
    <property type="evidence" value="ECO:0007669"/>
    <property type="project" value="UniProtKB-UniRule"/>
</dbReference>
<dbReference type="GO" id="GO:0003735">
    <property type="term" value="F:structural constituent of ribosome"/>
    <property type="evidence" value="ECO:0000318"/>
    <property type="project" value="GO_Central"/>
</dbReference>
<dbReference type="GO" id="GO:0006412">
    <property type="term" value="P:translation"/>
    <property type="evidence" value="ECO:0007669"/>
    <property type="project" value="UniProtKB-UniRule"/>
</dbReference>
<dbReference type="FunFam" id="2.40.30.10:FF:000004">
    <property type="entry name" value="50S ribosomal protein L3"/>
    <property type="match status" value="1"/>
</dbReference>
<dbReference type="FunFam" id="3.30.160.810:FF:000002">
    <property type="entry name" value="50S ribosomal protein L3"/>
    <property type="match status" value="1"/>
</dbReference>
<dbReference type="Gene3D" id="3.30.160.810">
    <property type="match status" value="1"/>
</dbReference>
<dbReference type="Gene3D" id="2.40.30.10">
    <property type="entry name" value="Translation factors"/>
    <property type="match status" value="1"/>
</dbReference>
<dbReference type="HAMAP" id="MF_01325_B">
    <property type="entry name" value="Ribosomal_uL3_B"/>
    <property type="match status" value="1"/>
</dbReference>
<dbReference type="InterPro" id="IPR000597">
    <property type="entry name" value="Ribosomal_uL3"/>
</dbReference>
<dbReference type="InterPro" id="IPR019927">
    <property type="entry name" value="Ribosomal_uL3_bac/org-type"/>
</dbReference>
<dbReference type="InterPro" id="IPR019926">
    <property type="entry name" value="Ribosomal_uL3_CS"/>
</dbReference>
<dbReference type="InterPro" id="IPR009000">
    <property type="entry name" value="Transl_B-barrel_sf"/>
</dbReference>
<dbReference type="NCBIfam" id="TIGR03625">
    <property type="entry name" value="L3_bact"/>
    <property type="match status" value="1"/>
</dbReference>
<dbReference type="PANTHER" id="PTHR11229">
    <property type="entry name" value="50S RIBOSOMAL PROTEIN L3"/>
    <property type="match status" value="1"/>
</dbReference>
<dbReference type="PANTHER" id="PTHR11229:SF16">
    <property type="entry name" value="LARGE RIBOSOMAL SUBUNIT PROTEIN UL3C"/>
    <property type="match status" value="1"/>
</dbReference>
<dbReference type="Pfam" id="PF00297">
    <property type="entry name" value="Ribosomal_L3"/>
    <property type="match status" value="1"/>
</dbReference>
<dbReference type="SUPFAM" id="SSF50447">
    <property type="entry name" value="Translation proteins"/>
    <property type="match status" value="1"/>
</dbReference>
<dbReference type="PROSITE" id="PS00474">
    <property type="entry name" value="RIBOSOMAL_L3"/>
    <property type="match status" value="1"/>
</dbReference>
<proteinExistence type="evidence at protein level"/>
<accession>Q8Y440</accession>
<comment type="function">
    <text evidence="1">One of the primary rRNA binding proteins, it binds directly near the 3'-end of the 23S rRNA, where it nucleates assembly of the 50S subunit.</text>
</comment>
<comment type="subunit">
    <text evidence="1">Part of the 50S ribosomal subunit. Forms a cluster with proteins L14 and L19.</text>
</comment>
<comment type="similarity">
    <text evidence="1">Belongs to the universal ribosomal protein uL3 family.</text>
</comment>